<gene>
    <name type="primary">NPSN12</name>
    <name type="ordered locus">At1g48240</name>
    <name type="ORF">F11A17.20</name>
    <name type="ORF">F21D18.4</name>
</gene>
<reference key="1">
    <citation type="journal article" date="2002" name="Plant Physiol.">
        <title>NPSN11 is a cell plate-associated SNARE protein that interacts with the syntaxin KNOLLE.</title>
        <authorList>
            <person name="Zheng H."/>
            <person name="Bednarek S.Y."/>
            <person name="Sanderfoot A.A."/>
            <person name="Alonso J."/>
            <person name="Ecker J.R."/>
            <person name="Raikhel N.V."/>
        </authorList>
    </citation>
    <scope>NUCLEOTIDE SEQUENCE [MRNA]</scope>
</reference>
<reference key="2">
    <citation type="journal article" date="2000" name="Nature">
        <title>Sequence and analysis of chromosome 1 of the plant Arabidopsis thaliana.</title>
        <authorList>
            <person name="Theologis A."/>
            <person name="Ecker J.R."/>
            <person name="Palm C.J."/>
            <person name="Federspiel N.A."/>
            <person name="Kaul S."/>
            <person name="White O."/>
            <person name="Alonso J."/>
            <person name="Altafi H."/>
            <person name="Araujo R."/>
            <person name="Bowman C.L."/>
            <person name="Brooks S.Y."/>
            <person name="Buehler E."/>
            <person name="Chan A."/>
            <person name="Chao Q."/>
            <person name="Chen H."/>
            <person name="Cheuk R.F."/>
            <person name="Chin C.W."/>
            <person name="Chung M.K."/>
            <person name="Conn L."/>
            <person name="Conway A.B."/>
            <person name="Conway A.R."/>
            <person name="Creasy T.H."/>
            <person name="Dewar K."/>
            <person name="Dunn P."/>
            <person name="Etgu P."/>
            <person name="Feldblyum T.V."/>
            <person name="Feng J.-D."/>
            <person name="Fong B."/>
            <person name="Fujii C.Y."/>
            <person name="Gill J.E."/>
            <person name="Goldsmith A.D."/>
            <person name="Haas B."/>
            <person name="Hansen N.F."/>
            <person name="Hughes B."/>
            <person name="Huizar L."/>
            <person name="Hunter J.L."/>
            <person name="Jenkins J."/>
            <person name="Johnson-Hopson C."/>
            <person name="Khan S."/>
            <person name="Khaykin E."/>
            <person name="Kim C.J."/>
            <person name="Koo H.L."/>
            <person name="Kremenetskaia I."/>
            <person name="Kurtz D.B."/>
            <person name="Kwan A."/>
            <person name="Lam B."/>
            <person name="Langin-Hooper S."/>
            <person name="Lee A."/>
            <person name="Lee J.M."/>
            <person name="Lenz C.A."/>
            <person name="Li J.H."/>
            <person name="Li Y.-P."/>
            <person name="Lin X."/>
            <person name="Liu S.X."/>
            <person name="Liu Z.A."/>
            <person name="Luros J.S."/>
            <person name="Maiti R."/>
            <person name="Marziali A."/>
            <person name="Militscher J."/>
            <person name="Miranda M."/>
            <person name="Nguyen M."/>
            <person name="Nierman W.C."/>
            <person name="Osborne B.I."/>
            <person name="Pai G."/>
            <person name="Peterson J."/>
            <person name="Pham P.K."/>
            <person name="Rizzo M."/>
            <person name="Rooney T."/>
            <person name="Rowley D."/>
            <person name="Sakano H."/>
            <person name="Salzberg S.L."/>
            <person name="Schwartz J.R."/>
            <person name="Shinn P."/>
            <person name="Southwick A.M."/>
            <person name="Sun H."/>
            <person name="Tallon L.J."/>
            <person name="Tambunga G."/>
            <person name="Toriumi M.J."/>
            <person name="Town C.D."/>
            <person name="Utterback T."/>
            <person name="Van Aken S."/>
            <person name="Vaysberg M."/>
            <person name="Vysotskaia V.S."/>
            <person name="Walker M."/>
            <person name="Wu D."/>
            <person name="Yu G."/>
            <person name="Fraser C.M."/>
            <person name="Venter J.C."/>
            <person name="Davis R.W."/>
        </authorList>
    </citation>
    <scope>NUCLEOTIDE SEQUENCE [LARGE SCALE GENOMIC DNA]</scope>
    <source>
        <strain>cv. Columbia</strain>
    </source>
</reference>
<reference key="3">
    <citation type="journal article" date="2017" name="Plant J.">
        <title>Araport11: a complete reannotation of the Arabidopsis thaliana reference genome.</title>
        <authorList>
            <person name="Cheng C.Y."/>
            <person name="Krishnakumar V."/>
            <person name="Chan A.P."/>
            <person name="Thibaud-Nissen F."/>
            <person name="Schobel S."/>
            <person name="Town C.D."/>
        </authorList>
    </citation>
    <scope>GENOME REANNOTATION</scope>
    <source>
        <strain>cv. Columbia</strain>
    </source>
</reference>
<reference key="4">
    <citation type="journal article" date="2003" name="Science">
        <title>Empirical analysis of transcriptional activity in the Arabidopsis genome.</title>
        <authorList>
            <person name="Yamada K."/>
            <person name="Lim J."/>
            <person name="Dale J.M."/>
            <person name="Chen H."/>
            <person name="Shinn P."/>
            <person name="Palm C.J."/>
            <person name="Southwick A.M."/>
            <person name="Wu H.C."/>
            <person name="Kim C.J."/>
            <person name="Nguyen M."/>
            <person name="Pham P.K."/>
            <person name="Cheuk R.F."/>
            <person name="Karlin-Newmann G."/>
            <person name="Liu S.X."/>
            <person name="Lam B."/>
            <person name="Sakano H."/>
            <person name="Wu T."/>
            <person name="Yu G."/>
            <person name="Miranda M."/>
            <person name="Quach H.L."/>
            <person name="Tripp M."/>
            <person name="Chang C.H."/>
            <person name="Lee J.M."/>
            <person name="Toriumi M.J."/>
            <person name="Chan M.M."/>
            <person name="Tang C.C."/>
            <person name="Onodera C.S."/>
            <person name="Deng J.M."/>
            <person name="Akiyama K."/>
            <person name="Ansari Y."/>
            <person name="Arakawa T."/>
            <person name="Banh J."/>
            <person name="Banno F."/>
            <person name="Bowser L."/>
            <person name="Brooks S.Y."/>
            <person name="Carninci P."/>
            <person name="Chao Q."/>
            <person name="Choy N."/>
            <person name="Enju A."/>
            <person name="Goldsmith A.D."/>
            <person name="Gurjal M."/>
            <person name="Hansen N.F."/>
            <person name="Hayashizaki Y."/>
            <person name="Johnson-Hopson C."/>
            <person name="Hsuan V.W."/>
            <person name="Iida K."/>
            <person name="Karnes M."/>
            <person name="Khan S."/>
            <person name="Koesema E."/>
            <person name="Ishida J."/>
            <person name="Jiang P.X."/>
            <person name="Jones T."/>
            <person name="Kawai J."/>
            <person name="Kamiya A."/>
            <person name="Meyers C."/>
            <person name="Nakajima M."/>
            <person name="Narusaka M."/>
            <person name="Seki M."/>
            <person name="Sakurai T."/>
            <person name="Satou M."/>
            <person name="Tamse R."/>
            <person name="Vaysberg M."/>
            <person name="Wallender E.K."/>
            <person name="Wong C."/>
            <person name="Yamamura Y."/>
            <person name="Yuan S."/>
            <person name="Shinozaki K."/>
            <person name="Davis R.W."/>
            <person name="Theologis A."/>
            <person name="Ecker J.R."/>
        </authorList>
    </citation>
    <scope>NUCLEOTIDE SEQUENCE [LARGE SCALE MRNA]</scope>
    <source>
        <strain>cv. Columbia</strain>
    </source>
</reference>
<accession>Q9LNH6</accession>
<accession>Q9SX59</accession>
<sequence>MASELPMSPHLEQIHGEIRDHFRALANGFQRLDKIKDSSRQSKQLEELAEKMRDCKRLVKEFDRELKDGEARNSPQVNKQLNDEKQSMIKELNSYVALRKTYLNTLGNKKVELFDTGAGVSGEPTAEENVQMASTMSNQELVDAGMKRMDETDQAIERSKQVVHQTLEVGTQTASNLKGQTDQMGRVVNDLDTIQFSLKKASQLVKEIGRQVATDKCIMAFLFLIVCGVIAIIIVKIVNPNNKDIRDIPGLAPPAQSRKLLYFRE</sequence>
<proteinExistence type="evidence at transcript level"/>
<evidence type="ECO:0000250" key="1"/>
<evidence type="ECO:0000250" key="2">
    <source>
        <dbReference type="UniProtKB" id="Q9LRP1"/>
    </source>
</evidence>
<evidence type="ECO:0000255" key="3"/>
<evidence type="ECO:0000255" key="4">
    <source>
        <dbReference type="PROSITE-ProRule" id="PRU00202"/>
    </source>
</evidence>
<evidence type="ECO:0000305" key="5"/>
<feature type="chain" id="PRO_0000213617" description="Novel plant SNARE 12">
    <location>
        <begin position="1"/>
        <end position="265"/>
    </location>
</feature>
<feature type="topological domain" description="Cytoplasmic" evidence="3">
    <location>
        <begin position="1"/>
        <end position="217"/>
    </location>
</feature>
<feature type="transmembrane region" description="Helical; Anchor for type IV membrane protein" evidence="3">
    <location>
        <begin position="218"/>
        <end position="238"/>
    </location>
</feature>
<feature type="topological domain" description="Vesicular" evidence="3">
    <location>
        <begin position="239"/>
        <end position="265"/>
    </location>
</feature>
<feature type="domain" description="t-SNARE coiled-coil homology" evidence="4">
    <location>
        <begin position="146"/>
        <end position="208"/>
    </location>
</feature>
<feature type="coiled-coil region" evidence="3">
    <location>
        <begin position="32"/>
        <end position="106"/>
    </location>
</feature>
<feature type="modified residue" description="Phosphoserine" evidence="2">
    <location>
        <position position="74"/>
    </location>
</feature>
<organism>
    <name type="scientific">Arabidopsis thaliana</name>
    <name type="common">Mouse-ear cress</name>
    <dbReference type="NCBI Taxonomy" id="3702"/>
    <lineage>
        <taxon>Eukaryota</taxon>
        <taxon>Viridiplantae</taxon>
        <taxon>Streptophyta</taxon>
        <taxon>Embryophyta</taxon>
        <taxon>Tracheophyta</taxon>
        <taxon>Spermatophyta</taxon>
        <taxon>Magnoliopsida</taxon>
        <taxon>eudicotyledons</taxon>
        <taxon>Gunneridae</taxon>
        <taxon>Pentapetalae</taxon>
        <taxon>rosids</taxon>
        <taxon>malvids</taxon>
        <taxon>Brassicales</taxon>
        <taxon>Brassicaceae</taxon>
        <taxon>Camelineae</taxon>
        <taxon>Arabidopsis</taxon>
    </lineage>
</organism>
<comment type="function">
    <text evidence="1">Vesicle trafficking protein that functions in the secretory pathway.</text>
</comment>
<comment type="subcellular location">
    <subcellularLocation>
        <location evidence="1">Membrane</location>
        <topology evidence="1">Single-pass type IV membrane protein</topology>
    </subcellularLocation>
</comment>
<comment type="tissue specificity">
    <text>Expressed in roots, stems, flower, siliques and leaves.</text>
</comment>
<comment type="similarity">
    <text evidence="5">Belongs to the novel plant SNARE family.</text>
</comment>
<comment type="sequence caution" evidence="5">
    <conflict type="erroneous gene model prediction">
        <sequence resource="EMBL-CDS" id="AAD49774"/>
    </conflict>
</comment>
<protein>
    <recommendedName>
        <fullName>Novel plant SNARE 12</fullName>
        <shortName>AtNPSN12</shortName>
    </recommendedName>
</protein>
<name>NPS12_ARATH</name>
<dbReference type="EMBL" id="AF487545">
    <property type="protein sequence ID" value="AAL92119.1"/>
    <property type="molecule type" value="mRNA"/>
</dbReference>
<dbReference type="EMBL" id="AC007932">
    <property type="protein sequence ID" value="AAD49774.2"/>
    <property type="status" value="ALT_SEQ"/>
    <property type="molecule type" value="Genomic_DNA"/>
</dbReference>
<dbReference type="EMBL" id="AC023673">
    <property type="protein sequence ID" value="AAF79516.1"/>
    <property type="molecule type" value="Genomic_DNA"/>
</dbReference>
<dbReference type="EMBL" id="CP002684">
    <property type="protein sequence ID" value="AEE32268.1"/>
    <property type="molecule type" value="Genomic_DNA"/>
</dbReference>
<dbReference type="EMBL" id="BT005271">
    <property type="protein sequence ID" value="AAO63335.1"/>
    <property type="molecule type" value="mRNA"/>
</dbReference>
<dbReference type="PIR" id="C96522">
    <property type="entry name" value="C96522"/>
</dbReference>
<dbReference type="RefSeq" id="NP_175258.2">
    <property type="nucleotide sequence ID" value="NM_103721.5"/>
</dbReference>
<dbReference type="SMR" id="Q9LNH6"/>
<dbReference type="BioGRID" id="26469">
    <property type="interactions" value="3"/>
</dbReference>
<dbReference type="FunCoup" id="Q9LNH6">
    <property type="interactions" value="41"/>
</dbReference>
<dbReference type="IntAct" id="Q9LNH6">
    <property type="interactions" value="3"/>
</dbReference>
<dbReference type="STRING" id="3702.Q9LNH6"/>
<dbReference type="iPTMnet" id="Q9LNH6"/>
<dbReference type="PaxDb" id="3702-AT1G48240.1"/>
<dbReference type="ProteomicsDB" id="250517"/>
<dbReference type="EnsemblPlants" id="AT1G48240.1">
    <property type="protein sequence ID" value="AT1G48240.1"/>
    <property type="gene ID" value="AT1G48240"/>
</dbReference>
<dbReference type="GeneID" id="841244"/>
<dbReference type="Gramene" id="AT1G48240.1">
    <property type="protein sequence ID" value="AT1G48240.1"/>
    <property type="gene ID" value="AT1G48240"/>
</dbReference>
<dbReference type="KEGG" id="ath:AT1G48240"/>
<dbReference type="Araport" id="AT1G48240"/>
<dbReference type="TAIR" id="AT1G48240">
    <property type="gene designation" value="NPSN12"/>
</dbReference>
<dbReference type="eggNOG" id="ENOG502QQ25">
    <property type="taxonomic scope" value="Eukaryota"/>
</dbReference>
<dbReference type="HOGENOM" id="CLU_058321_0_0_1"/>
<dbReference type="InParanoid" id="Q9LNH6"/>
<dbReference type="OMA" id="IIWRIVD"/>
<dbReference type="OrthoDB" id="19261at2759"/>
<dbReference type="PhylomeDB" id="Q9LNH6"/>
<dbReference type="PRO" id="PR:Q9LNH6"/>
<dbReference type="Proteomes" id="UP000006548">
    <property type="component" value="Chromosome 1"/>
</dbReference>
<dbReference type="ExpressionAtlas" id="Q9LNH6">
    <property type="expression patterns" value="baseline and differential"/>
</dbReference>
<dbReference type="GO" id="GO:0005886">
    <property type="term" value="C:plasma membrane"/>
    <property type="evidence" value="ECO:0007005"/>
    <property type="project" value="TAIR"/>
</dbReference>
<dbReference type="GO" id="GO:0009506">
    <property type="term" value="C:plasmodesma"/>
    <property type="evidence" value="ECO:0007005"/>
    <property type="project" value="TAIR"/>
</dbReference>
<dbReference type="GO" id="GO:0031201">
    <property type="term" value="C:SNARE complex"/>
    <property type="evidence" value="ECO:0007669"/>
    <property type="project" value="InterPro"/>
</dbReference>
<dbReference type="GO" id="GO:0005484">
    <property type="term" value="F:SNAP receptor activity"/>
    <property type="evidence" value="ECO:0007669"/>
    <property type="project" value="InterPro"/>
</dbReference>
<dbReference type="GO" id="GO:0015031">
    <property type="term" value="P:protein transport"/>
    <property type="evidence" value="ECO:0007669"/>
    <property type="project" value="UniProtKB-KW"/>
</dbReference>
<dbReference type="CDD" id="cd15861">
    <property type="entry name" value="SNARE_SNAP25N_23N_29N_SEC9N"/>
    <property type="match status" value="1"/>
</dbReference>
<dbReference type="FunFam" id="1.20.5.110:FF:000021">
    <property type="entry name" value="novel plant SNARE 11"/>
    <property type="match status" value="1"/>
</dbReference>
<dbReference type="Gene3D" id="1.20.5.110">
    <property type="match status" value="1"/>
</dbReference>
<dbReference type="InterPro" id="IPR044766">
    <property type="entry name" value="NPSN/SNAP25-like_N_SNARE"/>
</dbReference>
<dbReference type="InterPro" id="IPR000727">
    <property type="entry name" value="T_SNARE_dom"/>
</dbReference>
<dbReference type="PANTHER" id="PTHR21230:SF79">
    <property type="entry name" value="T-SNARE COILED-COIL HOMOLOGY DOMAIN-CONTAINING PROTEIN"/>
    <property type="match status" value="1"/>
</dbReference>
<dbReference type="PANTHER" id="PTHR21230">
    <property type="entry name" value="VESICLE TRANSPORT V-SNARE PROTEIN VTI1-RELATED"/>
    <property type="match status" value="1"/>
</dbReference>
<dbReference type="Pfam" id="PF12352">
    <property type="entry name" value="V-SNARE_C"/>
    <property type="match status" value="1"/>
</dbReference>
<dbReference type="SMART" id="SM00397">
    <property type="entry name" value="t_SNARE"/>
    <property type="match status" value="1"/>
</dbReference>
<dbReference type="SUPFAM" id="SSF58038">
    <property type="entry name" value="SNARE fusion complex"/>
    <property type="match status" value="1"/>
</dbReference>
<dbReference type="PROSITE" id="PS50192">
    <property type="entry name" value="T_SNARE"/>
    <property type="match status" value="1"/>
</dbReference>
<keyword id="KW-0175">Coiled coil</keyword>
<keyword id="KW-0472">Membrane</keyword>
<keyword id="KW-0597">Phosphoprotein</keyword>
<keyword id="KW-0653">Protein transport</keyword>
<keyword id="KW-1185">Reference proteome</keyword>
<keyword id="KW-0812">Transmembrane</keyword>
<keyword id="KW-1133">Transmembrane helix</keyword>
<keyword id="KW-0813">Transport</keyword>